<name>MEND_ECOK1</name>
<sequence length="556" mass="61418">MSVSAFNRRWAAVILEALTRHGVRHICIAPGSRSTPLTLAAAENSAFIHHTHFDERGLGHLALGLAKVSKQPVAVIVTSGTAVANLYPALIEAGLTGEKLILLTADRPPELIDCGANQAIRQPGMFASHPTHSISLPRPTQDIPARWLVSTIDHALGTLHAGGVHINCPFAEPLYGEMDDTGISWQQRLGDWWQDDKPWLREAPRRESEKQRDWFFWRQKRGVVVAGRMSAEEGKKVALWAQTLGWPLIGDVLSQTGQPLPCADLWLGNAKATSELQQAQIVVQLGSSLTGKRLLQWQASCEPEEYWIVDDIEGRLDPAHHRGRRLIANIADWLELHPAEKRQPWCVEIPRLAEQAMQAVIARRDAFGEAQLAHRISDYLPEQGQLFVGNSLVVRLIDALSQLPAGYPVYSNRGASGIDGLLSTAAGVQRASGKPTLAIVGDLSALYDLNALALLRQVSAPLVLIVVNNNGGQIFSLLPTPKSERERFYLMPQNVHFEHAAAMFELKYHRPQNWQELETTLVDAWRTPTTTVIEMVVNDTDGAQTLQQLLAQVSHL</sequence>
<keyword id="KW-0460">Magnesium</keyword>
<keyword id="KW-0464">Manganese</keyword>
<keyword id="KW-0474">Menaquinone biosynthesis</keyword>
<keyword id="KW-0479">Metal-binding</keyword>
<keyword id="KW-1185">Reference proteome</keyword>
<keyword id="KW-0786">Thiamine pyrophosphate</keyword>
<keyword id="KW-0808">Transferase</keyword>
<organism>
    <name type="scientific">Escherichia coli O1:K1 / APEC</name>
    <dbReference type="NCBI Taxonomy" id="405955"/>
    <lineage>
        <taxon>Bacteria</taxon>
        <taxon>Pseudomonadati</taxon>
        <taxon>Pseudomonadota</taxon>
        <taxon>Gammaproteobacteria</taxon>
        <taxon>Enterobacterales</taxon>
        <taxon>Enterobacteriaceae</taxon>
        <taxon>Escherichia</taxon>
    </lineage>
</organism>
<protein>
    <recommendedName>
        <fullName evidence="1">2-succinyl-5-enolpyruvyl-6-hydroxy-3-cyclohexene-1-carboxylate synthase</fullName>
        <shortName evidence="1">SEPHCHC synthase</shortName>
        <ecNumber evidence="1">2.2.1.9</ecNumber>
    </recommendedName>
    <alternativeName>
        <fullName evidence="1">Menaquinone biosynthesis protein MenD</fullName>
    </alternativeName>
</protein>
<reference key="1">
    <citation type="journal article" date="2007" name="J. Bacteriol.">
        <title>The genome sequence of avian pathogenic Escherichia coli strain O1:K1:H7 shares strong similarities with human extraintestinal pathogenic E. coli genomes.</title>
        <authorList>
            <person name="Johnson T.J."/>
            <person name="Kariyawasam S."/>
            <person name="Wannemuehler Y."/>
            <person name="Mangiamele P."/>
            <person name="Johnson S.J."/>
            <person name="Doetkott C."/>
            <person name="Skyberg J.A."/>
            <person name="Lynne A.M."/>
            <person name="Johnson J.R."/>
            <person name="Nolan L.K."/>
        </authorList>
    </citation>
    <scope>NUCLEOTIDE SEQUENCE [LARGE SCALE GENOMIC DNA]</scope>
</reference>
<accession>A1ADB6</accession>
<comment type="function">
    <text evidence="1">Catalyzes the thiamine diphosphate-dependent decarboxylation of 2-oxoglutarate and the subsequent addition of the resulting succinic semialdehyde-thiamine pyrophosphate anion to isochorismate to yield 2-succinyl-5-enolpyruvyl-6-hydroxy-3-cyclohexene-1-carboxylate (SEPHCHC).</text>
</comment>
<comment type="catalytic activity">
    <reaction evidence="1">
        <text>isochorismate + 2-oxoglutarate + H(+) = 5-enolpyruvoyl-6-hydroxy-2-succinyl-cyclohex-3-ene-1-carboxylate + CO2</text>
        <dbReference type="Rhea" id="RHEA:25593"/>
        <dbReference type="ChEBI" id="CHEBI:15378"/>
        <dbReference type="ChEBI" id="CHEBI:16526"/>
        <dbReference type="ChEBI" id="CHEBI:16810"/>
        <dbReference type="ChEBI" id="CHEBI:29780"/>
        <dbReference type="ChEBI" id="CHEBI:58818"/>
        <dbReference type="EC" id="2.2.1.9"/>
    </reaction>
</comment>
<comment type="cofactor">
    <cofactor evidence="1">
        <name>Mg(2+)</name>
        <dbReference type="ChEBI" id="CHEBI:18420"/>
    </cofactor>
    <cofactor evidence="1">
        <name>Mn(2+)</name>
        <dbReference type="ChEBI" id="CHEBI:29035"/>
    </cofactor>
</comment>
<comment type="cofactor">
    <cofactor evidence="1">
        <name>thiamine diphosphate</name>
        <dbReference type="ChEBI" id="CHEBI:58937"/>
    </cofactor>
    <text evidence="1">Binds 1 thiamine pyrophosphate per subunit.</text>
</comment>
<comment type="pathway">
    <text evidence="1">Quinol/quinone metabolism; 1,4-dihydroxy-2-naphthoate biosynthesis; 1,4-dihydroxy-2-naphthoate from chorismate: step 2/7.</text>
</comment>
<comment type="pathway">
    <text evidence="1">Quinol/quinone metabolism; menaquinone biosynthesis.</text>
</comment>
<comment type="subunit">
    <text evidence="1">Homodimer.</text>
</comment>
<comment type="similarity">
    <text evidence="1">Belongs to the TPP enzyme family. MenD subfamily.</text>
</comment>
<comment type="sequence caution" evidence="2">
    <conflict type="erroneous initiation">
        <sequence resource="EMBL-CDS" id="ABJ01656"/>
    </conflict>
</comment>
<evidence type="ECO:0000255" key="1">
    <source>
        <dbReference type="HAMAP-Rule" id="MF_01659"/>
    </source>
</evidence>
<evidence type="ECO:0000305" key="2"/>
<dbReference type="EC" id="2.2.1.9" evidence="1"/>
<dbReference type="EMBL" id="CP000468">
    <property type="protein sequence ID" value="ABJ01656.1"/>
    <property type="status" value="ALT_INIT"/>
    <property type="molecule type" value="Genomic_DNA"/>
</dbReference>
<dbReference type="RefSeq" id="WP_000116370.1">
    <property type="nucleotide sequence ID" value="NZ_CADILS010000004.1"/>
</dbReference>
<dbReference type="SMR" id="A1ADB6"/>
<dbReference type="KEGG" id="ecv:APECO1_4297"/>
<dbReference type="HOGENOM" id="CLU_006051_3_0_6"/>
<dbReference type="UniPathway" id="UPA00079"/>
<dbReference type="UniPathway" id="UPA01057">
    <property type="reaction ID" value="UER00164"/>
</dbReference>
<dbReference type="Proteomes" id="UP000008216">
    <property type="component" value="Chromosome"/>
</dbReference>
<dbReference type="GO" id="GO:0070204">
    <property type="term" value="F:2-succinyl-5-enolpyruvyl-6-hydroxy-3-cyclohexene-1-carboxylic-acid synthase activity"/>
    <property type="evidence" value="ECO:0007669"/>
    <property type="project" value="UniProtKB-UniRule"/>
</dbReference>
<dbReference type="GO" id="GO:0000287">
    <property type="term" value="F:magnesium ion binding"/>
    <property type="evidence" value="ECO:0007669"/>
    <property type="project" value="UniProtKB-UniRule"/>
</dbReference>
<dbReference type="GO" id="GO:0030145">
    <property type="term" value="F:manganese ion binding"/>
    <property type="evidence" value="ECO:0007669"/>
    <property type="project" value="UniProtKB-UniRule"/>
</dbReference>
<dbReference type="GO" id="GO:0030976">
    <property type="term" value="F:thiamine pyrophosphate binding"/>
    <property type="evidence" value="ECO:0007669"/>
    <property type="project" value="UniProtKB-UniRule"/>
</dbReference>
<dbReference type="GO" id="GO:0009234">
    <property type="term" value="P:menaquinone biosynthetic process"/>
    <property type="evidence" value="ECO:0007669"/>
    <property type="project" value="UniProtKB-UniRule"/>
</dbReference>
<dbReference type="CDD" id="cd07037">
    <property type="entry name" value="TPP_PYR_MenD"/>
    <property type="match status" value="1"/>
</dbReference>
<dbReference type="CDD" id="cd02009">
    <property type="entry name" value="TPP_SHCHC_synthase"/>
    <property type="match status" value="1"/>
</dbReference>
<dbReference type="FunFam" id="3.40.50.1220:FF:000010">
    <property type="entry name" value="2-succinyl-5-enolpyruvyl-6-hydroxy-3-cyclohexene-1-carboxylate synthase"/>
    <property type="match status" value="1"/>
</dbReference>
<dbReference type="FunFam" id="3.40.50.970:FF:000029">
    <property type="entry name" value="2-succinyl-5-enolpyruvyl-6-hydroxy-3-cyclohexene-1-carboxylate synthase"/>
    <property type="match status" value="1"/>
</dbReference>
<dbReference type="Gene3D" id="3.40.50.970">
    <property type="match status" value="2"/>
</dbReference>
<dbReference type="Gene3D" id="3.40.50.1220">
    <property type="entry name" value="TPP-binding domain"/>
    <property type="match status" value="1"/>
</dbReference>
<dbReference type="HAMAP" id="MF_01659">
    <property type="entry name" value="MenD"/>
    <property type="match status" value="1"/>
</dbReference>
<dbReference type="InterPro" id="IPR004433">
    <property type="entry name" value="MenaQ_synth_MenD"/>
</dbReference>
<dbReference type="InterPro" id="IPR032264">
    <property type="entry name" value="MenD_middle"/>
</dbReference>
<dbReference type="InterPro" id="IPR029061">
    <property type="entry name" value="THDP-binding"/>
</dbReference>
<dbReference type="InterPro" id="IPR012001">
    <property type="entry name" value="Thiamin_PyroP_enz_TPP-bd_dom"/>
</dbReference>
<dbReference type="InterPro" id="IPR011766">
    <property type="entry name" value="TPP_enzyme_TPP-bd"/>
</dbReference>
<dbReference type="NCBIfam" id="TIGR00173">
    <property type="entry name" value="menD"/>
    <property type="match status" value="1"/>
</dbReference>
<dbReference type="PANTHER" id="PTHR42916">
    <property type="entry name" value="2-SUCCINYL-5-ENOLPYRUVYL-6-HYDROXY-3-CYCLOHEXENE-1-CARBOXYLATE SYNTHASE"/>
    <property type="match status" value="1"/>
</dbReference>
<dbReference type="PANTHER" id="PTHR42916:SF1">
    <property type="entry name" value="PROTEIN PHYLLO, CHLOROPLASTIC"/>
    <property type="match status" value="1"/>
</dbReference>
<dbReference type="Pfam" id="PF02775">
    <property type="entry name" value="TPP_enzyme_C"/>
    <property type="match status" value="1"/>
</dbReference>
<dbReference type="Pfam" id="PF16582">
    <property type="entry name" value="TPP_enzyme_M_2"/>
    <property type="match status" value="1"/>
</dbReference>
<dbReference type="Pfam" id="PF02776">
    <property type="entry name" value="TPP_enzyme_N"/>
    <property type="match status" value="1"/>
</dbReference>
<dbReference type="PIRSF" id="PIRSF004983">
    <property type="entry name" value="MenD"/>
    <property type="match status" value="1"/>
</dbReference>
<dbReference type="SUPFAM" id="SSF52518">
    <property type="entry name" value="Thiamin diphosphate-binding fold (THDP-binding)"/>
    <property type="match status" value="2"/>
</dbReference>
<feature type="chain" id="PRO_0000341743" description="2-succinyl-5-enolpyruvyl-6-hydroxy-3-cyclohexene-1-carboxylate synthase">
    <location>
        <begin position="1"/>
        <end position="556"/>
    </location>
</feature>
<gene>
    <name evidence="1" type="primary">menD</name>
    <name type="ordered locus">Ecok1_21620</name>
    <name type="ORF">APECO1_4297</name>
</gene>
<proteinExistence type="inferred from homology"/>